<name>Z804A_MOUSE</name>
<protein>
    <recommendedName>
        <fullName>Zinc finger protein 804A</fullName>
    </recommendedName>
</protein>
<accession>A2AKY4</accession>
<accession>Q8BHY7</accession>
<gene>
    <name type="primary">Znf804a</name>
    <name type="synonym">Zfp804a</name>
</gene>
<proteinExistence type="evidence at transcript level"/>
<dbReference type="EMBL" id="AL772389">
    <property type="status" value="NOT_ANNOTATED_CDS"/>
    <property type="molecule type" value="Genomic_DNA"/>
</dbReference>
<dbReference type="EMBL" id="AL845296">
    <property type="status" value="NOT_ANNOTATED_CDS"/>
    <property type="molecule type" value="Genomic_DNA"/>
</dbReference>
<dbReference type="EMBL" id="AL928991">
    <property type="status" value="NOT_ANNOTATED_CDS"/>
    <property type="molecule type" value="Genomic_DNA"/>
</dbReference>
<dbReference type="EMBL" id="AK049881">
    <property type="protein sequence ID" value="BAC33969.1"/>
    <property type="molecule type" value="mRNA"/>
</dbReference>
<dbReference type="CCDS" id="CCDS38160.1"/>
<dbReference type="RefSeq" id="NP_780722.2">
    <property type="nucleotide sequence ID" value="NM_175513.3"/>
</dbReference>
<dbReference type="BioGRID" id="232318">
    <property type="interactions" value="2"/>
</dbReference>
<dbReference type="FunCoup" id="A2AKY4">
    <property type="interactions" value="357"/>
</dbReference>
<dbReference type="STRING" id="10090.ENSMUSP00000041941"/>
<dbReference type="iPTMnet" id="A2AKY4"/>
<dbReference type="PhosphoSitePlus" id="A2AKY4"/>
<dbReference type="PaxDb" id="10090-ENSMUSP00000041941"/>
<dbReference type="PeptideAtlas" id="A2AKY4"/>
<dbReference type="Antibodypedia" id="33997">
    <property type="antibodies" value="29 antibodies from 11 providers"/>
</dbReference>
<dbReference type="Ensembl" id="ENSMUST00000047527.8">
    <property type="protein sequence ID" value="ENSMUSP00000041941.8"/>
    <property type="gene ID" value="ENSMUSG00000070866.5"/>
</dbReference>
<dbReference type="GeneID" id="241514"/>
<dbReference type="KEGG" id="mmu:241514"/>
<dbReference type="UCSC" id="uc008khu.1">
    <property type="organism name" value="mouse"/>
</dbReference>
<dbReference type="AGR" id="MGI:2442949"/>
<dbReference type="CTD" id="241514"/>
<dbReference type="MGI" id="MGI:2442949">
    <property type="gene designation" value="Zfp804a"/>
</dbReference>
<dbReference type="VEuPathDB" id="HostDB:ENSMUSG00000070866"/>
<dbReference type="eggNOG" id="ENOG502QQR4">
    <property type="taxonomic scope" value="Eukaryota"/>
</dbReference>
<dbReference type="GeneTree" id="ENSGT00940000160909"/>
<dbReference type="HOGENOM" id="CLU_276771_0_0_1"/>
<dbReference type="InParanoid" id="A2AKY4"/>
<dbReference type="OMA" id="THEHWFH"/>
<dbReference type="OrthoDB" id="4822at2759"/>
<dbReference type="PhylomeDB" id="A2AKY4"/>
<dbReference type="TreeFam" id="TF332138"/>
<dbReference type="BioGRID-ORCS" id="241514">
    <property type="hits" value="3 hits in 75 CRISPR screens"/>
</dbReference>
<dbReference type="ChiTaRS" id="Zfp804a">
    <property type="organism name" value="mouse"/>
</dbReference>
<dbReference type="PRO" id="PR:A2AKY4"/>
<dbReference type="Proteomes" id="UP000000589">
    <property type="component" value="Chromosome 2"/>
</dbReference>
<dbReference type="RNAct" id="A2AKY4">
    <property type="molecule type" value="protein"/>
</dbReference>
<dbReference type="Bgee" id="ENSMUSG00000070866">
    <property type="expression patterns" value="Expressed in lateral geniculate body and 91 other cell types or tissues"/>
</dbReference>
<dbReference type="GO" id="GO:0005737">
    <property type="term" value="C:cytoplasm"/>
    <property type="evidence" value="ECO:0007669"/>
    <property type="project" value="Ensembl"/>
</dbReference>
<dbReference type="GO" id="GO:1901588">
    <property type="term" value="C:dendritic microtubule"/>
    <property type="evidence" value="ECO:0007669"/>
    <property type="project" value="Ensembl"/>
</dbReference>
<dbReference type="GO" id="GO:0043198">
    <property type="term" value="C:dendritic shaft"/>
    <property type="evidence" value="ECO:0007669"/>
    <property type="project" value="Ensembl"/>
</dbReference>
<dbReference type="GO" id="GO:0043197">
    <property type="term" value="C:dendritic spine"/>
    <property type="evidence" value="ECO:0007669"/>
    <property type="project" value="Ensembl"/>
</dbReference>
<dbReference type="GO" id="GO:0030426">
    <property type="term" value="C:growth cone"/>
    <property type="evidence" value="ECO:0007669"/>
    <property type="project" value="Ensembl"/>
</dbReference>
<dbReference type="GO" id="GO:0043025">
    <property type="term" value="C:neuronal cell body"/>
    <property type="evidence" value="ECO:0007669"/>
    <property type="project" value="Ensembl"/>
</dbReference>
<dbReference type="GO" id="GO:0005634">
    <property type="term" value="C:nucleus"/>
    <property type="evidence" value="ECO:0007669"/>
    <property type="project" value="Ensembl"/>
</dbReference>
<dbReference type="GO" id="GO:0005886">
    <property type="term" value="C:plasma membrane"/>
    <property type="evidence" value="ECO:0007669"/>
    <property type="project" value="Ensembl"/>
</dbReference>
<dbReference type="GO" id="GO:0098793">
    <property type="term" value="C:presynapse"/>
    <property type="evidence" value="ECO:0007669"/>
    <property type="project" value="Ensembl"/>
</dbReference>
<dbReference type="GO" id="GO:0008270">
    <property type="term" value="F:zinc ion binding"/>
    <property type="evidence" value="ECO:0007669"/>
    <property type="project" value="UniProtKB-KW"/>
</dbReference>
<dbReference type="GO" id="GO:1902952">
    <property type="term" value="P:positive regulation of dendritic spine maintenance"/>
    <property type="evidence" value="ECO:0007669"/>
    <property type="project" value="Ensembl"/>
</dbReference>
<dbReference type="GO" id="GO:0010628">
    <property type="term" value="P:positive regulation of gene expression"/>
    <property type="evidence" value="ECO:0007669"/>
    <property type="project" value="Ensembl"/>
</dbReference>
<dbReference type="GO" id="GO:0010976">
    <property type="term" value="P:positive regulation of neuron projection development"/>
    <property type="evidence" value="ECO:0007669"/>
    <property type="project" value="Ensembl"/>
</dbReference>
<dbReference type="InterPro" id="IPR052445">
    <property type="entry name" value="ZnF-G_patch_domain"/>
</dbReference>
<dbReference type="InterPro" id="IPR036236">
    <property type="entry name" value="Znf_C2H2_sf"/>
</dbReference>
<dbReference type="InterPro" id="IPR013087">
    <property type="entry name" value="Znf_C2H2_type"/>
</dbReference>
<dbReference type="PANTHER" id="PTHR17614:SF13">
    <property type="entry name" value="ZINC FINGER PROTEIN 804A"/>
    <property type="match status" value="1"/>
</dbReference>
<dbReference type="PANTHER" id="PTHR17614">
    <property type="entry name" value="ZINC FINGER-CONTAINING"/>
    <property type="match status" value="1"/>
</dbReference>
<dbReference type="SUPFAM" id="SSF57667">
    <property type="entry name" value="beta-beta-alpha zinc fingers"/>
    <property type="match status" value="1"/>
</dbReference>
<dbReference type="PROSITE" id="PS00028">
    <property type="entry name" value="ZINC_FINGER_C2H2_1"/>
    <property type="match status" value="1"/>
</dbReference>
<reference key="1">
    <citation type="journal article" date="2009" name="PLoS Biol.">
        <title>Lineage-specific biology revealed by a finished genome assembly of the mouse.</title>
        <authorList>
            <person name="Church D.M."/>
            <person name="Goodstadt L."/>
            <person name="Hillier L.W."/>
            <person name="Zody M.C."/>
            <person name="Goldstein S."/>
            <person name="She X."/>
            <person name="Bult C.J."/>
            <person name="Agarwala R."/>
            <person name="Cherry J.L."/>
            <person name="DiCuccio M."/>
            <person name="Hlavina W."/>
            <person name="Kapustin Y."/>
            <person name="Meric P."/>
            <person name="Maglott D."/>
            <person name="Birtle Z."/>
            <person name="Marques A.C."/>
            <person name="Graves T."/>
            <person name="Zhou S."/>
            <person name="Teague B."/>
            <person name="Potamousis K."/>
            <person name="Churas C."/>
            <person name="Place M."/>
            <person name="Herschleb J."/>
            <person name="Runnheim R."/>
            <person name="Forrest D."/>
            <person name="Amos-Landgraf J."/>
            <person name="Schwartz D.C."/>
            <person name="Cheng Z."/>
            <person name="Lindblad-Toh K."/>
            <person name="Eichler E.E."/>
            <person name="Ponting C.P."/>
        </authorList>
    </citation>
    <scope>NUCLEOTIDE SEQUENCE [LARGE SCALE GENOMIC DNA]</scope>
    <source>
        <strain>C57BL/6J</strain>
    </source>
</reference>
<reference key="2">
    <citation type="journal article" date="2005" name="Science">
        <title>The transcriptional landscape of the mammalian genome.</title>
        <authorList>
            <person name="Carninci P."/>
            <person name="Kasukawa T."/>
            <person name="Katayama S."/>
            <person name="Gough J."/>
            <person name="Frith M.C."/>
            <person name="Maeda N."/>
            <person name="Oyama R."/>
            <person name="Ravasi T."/>
            <person name="Lenhard B."/>
            <person name="Wells C."/>
            <person name="Kodzius R."/>
            <person name="Shimokawa K."/>
            <person name="Bajic V.B."/>
            <person name="Brenner S.E."/>
            <person name="Batalov S."/>
            <person name="Forrest A.R."/>
            <person name="Zavolan M."/>
            <person name="Davis M.J."/>
            <person name="Wilming L.G."/>
            <person name="Aidinis V."/>
            <person name="Allen J.E."/>
            <person name="Ambesi-Impiombato A."/>
            <person name="Apweiler R."/>
            <person name="Aturaliya R.N."/>
            <person name="Bailey T.L."/>
            <person name="Bansal M."/>
            <person name="Baxter L."/>
            <person name="Beisel K.W."/>
            <person name="Bersano T."/>
            <person name="Bono H."/>
            <person name="Chalk A.M."/>
            <person name="Chiu K.P."/>
            <person name="Choudhary V."/>
            <person name="Christoffels A."/>
            <person name="Clutterbuck D.R."/>
            <person name="Crowe M.L."/>
            <person name="Dalla E."/>
            <person name="Dalrymple B.P."/>
            <person name="de Bono B."/>
            <person name="Della Gatta G."/>
            <person name="di Bernardo D."/>
            <person name="Down T."/>
            <person name="Engstrom P."/>
            <person name="Fagiolini M."/>
            <person name="Faulkner G."/>
            <person name="Fletcher C.F."/>
            <person name="Fukushima T."/>
            <person name="Furuno M."/>
            <person name="Futaki S."/>
            <person name="Gariboldi M."/>
            <person name="Georgii-Hemming P."/>
            <person name="Gingeras T.R."/>
            <person name="Gojobori T."/>
            <person name="Green R.E."/>
            <person name="Gustincich S."/>
            <person name="Harbers M."/>
            <person name="Hayashi Y."/>
            <person name="Hensch T.K."/>
            <person name="Hirokawa N."/>
            <person name="Hill D."/>
            <person name="Huminiecki L."/>
            <person name="Iacono M."/>
            <person name="Ikeo K."/>
            <person name="Iwama A."/>
            <person name="Ishikawa T."/>
            <person name="Jakt M."/>
            <person name="Kanapin A."/>
            <person name="Katoh M."/>
            <person name="Kawasawa Y."/>
            <person name="Kelso J."/>
            <person name="Kitamura H."/>
            <person name="Kitano H."/>
            <person name="Kollias G."/>
            <person name="Krishnan S.P."/>
            <person name="Kruger A."/>
            <person name="Kummerfeld S.K."/>
            <person name="Kurochkin I.V."/>
            <person name="Lareau L.F."/>
            <person name="Lazarevic D."/>
            <person name="Lipovich L."/>
            <person name="Liu J."/>
            <person name="Liuni S."/>
            <person name="McWilliam S."/>
            <person name="Madan Babu M."/>
            <person name="Madera M."/>
            <person name="Marchionni L."/>
            <person name="Matsuda H."/>
            <person name="Matsuzawa S."/>
            <person name="Miki H."/>
            <person name="Mignone F."/>
            <person name="Miyake S."/>
            <person name="Morris K."/>
            <person name="Mottagui-Tabar S."/>
            <person name="Mulder N."/>
            <person name="Nakano N."/>
            <person name="Nakauchi H."/>
            <person name="Ng P."/>
            <person name="Nilsson R."/>
            <person name="Nishiguchi S."/>
            <person name="Nishikawa S."/>
            <person name="Nori F."/>
            <person name="Ohara O."/>
            <person name="Okazaki Y."/>
            <person name="Orlando V."/>
            <person name="Pang K.C."/>
            <person name="Pavan W.J."/>
            <person name="Pavesi G."/>
            <person name="Pesole G."/>
            <person name="Petrovsky N."/>
            <person name="Piazza S."/>
            <person name="Reed J."/>
            <person name="Reid J.F."/>
            <person name="Ring B.Z."/>
            <person name="Ringwald M."/>
            <person name="Rost B."/>
            <person name="Ruan Y."/>
            <person name="Salzberg S.L."/>
            <person name="Sandelin A."/>
            <person name="Schneider C."/>
            <person name="Schoenbach C."/>
            <person name="Sekiguchi K."/>
            <person name="Semple C.A."/>
            <person name="Seno S."/>
            <person name="Sessa L."/>
            <person name="Sheng Y."/>
            <person name="Shibata Y."/>
            <person name="Shimada H."/>
            <person name="Shimada K."/>
            <person name="Silva D."/>
            <person name="Sinclair B."/>
            <person name="Sperling S."/>
            <person name="Stupka E."/>
            <person name="Sugiura K."/>
            <person name="Sultana R."/>
            <person name="Takenaka Y."/>
            <person name="Taki K."/>
            <person name="Tammoja K."/>
            <person name="Tan S.L."/>
            <person name="Tang S."/>
            <person name="Taylor M.S."/>
            <person name="Tegner J."/>
            <person name="Teichmann S.A."/>
            <person name="Ueda H.R."/>
            <person name="van Nimwegen E."/>
            <person name="Verardo R."/>
            <person name="Wei C.L."/>
            <person name="Yagi K."/>
            <person name="Yamanishi H."/>
            <person name="Zabarovsky E."/>
            <person name="Zhu S."/>
            <person name="Zimmer A."/>
            <person name="Hide W."/>
            <person name="Bult C."/>
            <person name="Grimmond S.M."/>
            <person name="Teasdale R.D."/>
            <person name="Liu E.T."/>
            <person name="Brusic V."/>
            <person name="Quackenbush J."/>
            <person name="Wahlestedt C."/>
            <person name="Mattick J.S."/>
            <person name="Hume D.A."/>
            <person name="Kai C."/>
            <person name="Sasaki D."/>
            <person name="Tomaru Y."/>
            <person name="Fukuda S."/>
            <person name="Kanamori-Katayama M."/>
            <person name="Suzuki M."/>
            <person name="Aoki J."/>
            <person name="Arakawa T."/>
            <person name="Iida J."/>
            <person name="Imamura K."/>
            <person name="Itoh M."/>
            <person name="Kato T."/>
            <person name="Kawaji H."/>
            <person name="Kawagashira N."/>
            <person name="Kawashima T."/>
            <person name="Kojima M."/>
            <person name="Kondo S."/>
            <person name="Konno H."/>
            <person name="Nakano K."/>
            <person name="Ninomiya N."/>
            <person name="Nishio T."/>
            <person name="Okada M."/>
            <person name="Plessy C."/>
            <person name="Shibata K."/>
            <person name="Shiraki T."/>
            <person name="Suzuki S."/>
            <person name="Tagami M."/>
            <person name="Waki K."/>
            <person name="Watahiki A."/>
            <person name="Okamura-Oho Y."/>
            <person name="Suzuki H."/>
            <person name="Kawai J."/>
            <person name="Hayashizaki Y."/>
        </authorList>
    </citation>
    <scope>NUCLEOTIDE SEQUENCE [LARGE SCALE MRNA] OF 1-585</scope>
    <source>
        <strain>C57BL/6J</strain>
        <tissue>Hippocampus</tissue>
    </source>
</reference>
<feature type="chain" id="PRO_0000289141" description="Zinc finger protein 804A">
    <location>
        <begin position="1"/>
        <end position="1200"/>
    </location>
</feature>
<feature type="zinc finger region" description="C2H2-type">
    <location>
        <begin position="57"/>
        <end position="81"/>
    </location>
</feature>
<feature type="region of interest" description="Disordered" evidence="1">
    <location>
        <begin position="252"/>
        <end position="280"/>
    </location>
</feature>
<feature type="region of interest" description="Disordered" evidence="1">
    <location>
        <begin position="343"/>
        <end position="367"/>
    </location>
</feature>
<feature type="region of interest" description="Disordered" evidence="1">
    <location>
        <begin position="582"/>
        <end position="687"/>
    </location>
</feature>
<feature type="region of interest" description="Disordered" evidence="1">
    <location>
        <begin position="727"/>
        <end position="777"/>
    </location>
</feature>
<feature type="region of interest" description="Disordered" evidence="1">
    <location>
        <begin position="799"/>
        <end position="828"/>
    </location>
</feature>
<feature type="region of interest" description="Disordered" evidence="1">
    <location>
        <begin position="874"/>
        <end position="949"/>
    </location>
</feature>
<feature type="compositionally biased region" description="Basic residues" evidence="1">
    <location>
        <begin position="585"/>
        <end position="603"/>
    </location>
</feature>
<feature type="compositionally biased region" description="Basic and acidic residues" evidence="1">
    <location>
        <begin position="604"/>
        <end position="666"/>
    </location>
</feature>
<feature type="compositionally biased region" description="Polar residues" evidence="1">
    <location>
        <begin position="667"/>
        <end position="687"/>
    </location>
</feature>
<feature type="compositionally biased region" description="Polar residues" evidence="1">
    <location>
        <begin position="732"/>
        <end position="756"/>
    </location>
</feature>
<feature type="compositionally biased region" description="Basic residues" evidence="1">
    <location>
        <begin position="800"/>
        <end position="811"/>
    </location>
</feature>
<feature type="compositionally biased region" description="Polar residues" evidence="1">
    <location>
        <begin position="891"/>
        <end position="944"/>
    </location>
</feature>
<organism>
    <name type="scientific">Mus musculus</name>
    <name type="common">Mouse</name>
    <dbReference type="NCBI Taxonomy" id="10090"/>
    <lineage>
        <taxon>Eukaryota</taxon>
        <taxon>Metazoa</taxon>
        <taxon>Chordata</taxon>
        <taxon>Craniata</taxon>
        <taxon>Vertebrata</taxon>
        <taxon>Euteleostomi</taxon>
        <taxon>Mammalia</taxon>
        <taxon>Eutheria</taxon>
        <taxon>Euarchontoglires</taxon>
        <taxon>Glires</taxon>
        <taxon>Rodentia</taxon>
        <taxon>Myomorpha</taxon>
        <taxon>Muroidea</taxon>
        <taxon>Muridae</taxon>
        <taxon>Murinae</taxon>
        <taxon>Mus</taxon>
        <taxon>Mus</taxon>
    </lineage>
</organism>
<evidence type="ECO:0000256" key="1">
    <source>
        <dbReference type="SAM" id="MobiDB-lite"/>
    </source>
</evidence>
<sequence length="1200" mass="134850">MECYYIVISSTHLSNGHFRNIKGVFRGPLSKNGNKTLDYAEKENTIAKALEDLKANFYCELCDKQYYKHQEFDNHINSYDHAHKQRLKELKQREFARNVASKSRKDERKQEKALQRLHKLAELRKETVCAPGSGPMFKSTTVTVRENLNDVSQRESVDPINNQQDLIPSEEKERDGTTALAETETASNCTANNCQIGDQSQAVHRHRIGFSFAFPKKATVKLESCSAAAFSEYSDESSMEKEFSRKTRFVPSTSHLQLPPPTCELLSSEEKGNSPPPEAMCTDKATAQTEERKITSNENNTLLTSSFCQLQHYIPTCSEADTCQNLAPFEDQLPMEAVIVNEDGPVSKSNPNIIEKNPTVPNDRTSAQMTTEENITINDVTKMETRNKIDHEPLTPSSTIEESIRLQKRPDLCKRQCDPFVPVLNKLGSTVLQWPSEMLAYTTTEPSISYSCNPLCFDFKSTKLNNNQDKNKLTLNDLFSEQKEDCCKGAHADCKDVPIARVTNDETGHSKNDYPQVTTLSPVHVLSNGCDLGQNENVGQRYKHISCTNRQTNKYKFTRCQIKRDMLNEKYDKMRLKETREHWFHKSRRKKKRRKLCRYHPGKSSKEPEGSGKTERSRQRTDEARKNPREPVLEKHPRSPERASDLHQLPDERPKAASTHLGEKETMNTTVNTESNDAAPGSQNCGGKNATVVNEQAKPLVIHSVKQNLTYVRTYCCWKARTSRYQEDDGSLASQSNVKGPTQNQPVKRGYSSLTNDSERIHRKRRQHSCSYSSDESLNQQHHLGEYLKPLSTSLISCQPKKKRRRKRSRLHIGDGTTKMKGNSNYPMKCSSLSQPDELAKDCIKEDINPQENVSIEKNSEQTEQTEIKGMLHPYNPLLSEPSGEGEHSVTETTPCDSSQTSNDLATPVNVTRDPSNSTTDNTLLEHNQRSQTTNSNEKQTPFKVTNPERNFRHSQAKSYICRYELAETIPQGKTNEASTEWLCYNSGILNTQPPLQFKEAHVSGHAFVTTEQILAPLPLPEQALLIPLENHDKLKHLPCEVYQHIIQPNMLTNKVKFTFPPPPLPPPSTPVQPLPLQRPFCSTSVTTIHHTVLQHHAAAAAAAAAAAAAGTFKVLQPHQQFLPQVPALARTSIPQISVGTVGPRLCPGGQPALVASPQMPIIPASVLHPSPLAFPPLPHSFFPSLLSPHPTVIPLQPLF</sequence>
<keyword id="KW-0479">Metal-binding</keyword>
<keyword id="KW-1185">Reference proteome</keyword>
<keyword id="KW-0862">Zinc</keyword>
<keyword id="KW-0863">Zinc-finger</keyword>